<sequence>MRKLGPVTIDPRRHDAVLFDTTLDATQELVRQLQEVGVGTGVFGSGLDVPIVAAGRLAVRPGRCVVVSAHSAGVTAARESGFALIIGVDRTGCRDALRRDGADTVVTDLSEVSVRTGDRRMSQLPDALQALGLADGLVARQPAVFFDFDGTLSDIVEDPDAAWLAPGALEALQKLAARCPIAVLSGRDLADVTQRVGLPGIWYAGSHGFELTAPDGTHHQNDAAAAAIPVLKQAAAELRQQLGPFPGVVVEHKRFGVAVHYRNAARDRVGEVAAAVRTAEQRHALRVTTGREVIELRPDVDWDKGKTLLWVLDHLPHSGSAPLVPIYLGDDITDEDAFDVVGPHGVPIVVRHTDDGDRATAALFALDSPARVAEFTDRLARQLREAPLRAT</sequence>
<organism>
    <name type="scientific">Mycobacterium bovis (strain BCG / Pasteur 1173P2)</name>
    <dbReference type="NCBI Taxonomy" id="410289"/>
    <lineage>
        <taxon>Bacteria</taxon>
        <taxon>Bacillati</taxon>
        <taxon>Actinomycetota</taxon>
        <taxon>Actinomycetes</taxon>
        <taxon>Mycobacteriales</taxon>
        <taxon>Mycobacteriaceae</taxon>
        <taxon>Mycobacterium</taxon>
        <taxon>Mycobacterium tuberculosis complex</taxon>
    </lineage>
</organism>
<proteinExistence type="inferred from homology"/>
<accession>A1KP65</accession>
<evidence type="ECO:0000250" key="1"/>
<evidence type="ECO:0000305" key="2"/>
<name>OTSB_MYCBP</name>
<feature type="chain" id="PRO_0000370702" description="Trehalose-phosphate phosphatase">
    <location>
        <begin position="1"/>
        <end position="391"/>
    </location>
</feature>
<feature type="active site" description="Nucleophile" evidence="1">
    <location>
        <position position="147"/>
    </location>
</feature>
<feature type="binding site" evidence="1">
    <location>
        <begin position="147"/>
        <end position="149"/>
    </location>
    <ligand>
        <name>substrate</name>
    </ligand>
</feature>
<feature type="binding site" evidence="1">
    <location>
        <position position="147"/>
    </location>
    <ligand>
        <name>Mg(2+)</name>
        <dbReference type="ChEBI" id="CHEBI:18420"/>
    </ligand>
</feature>
<feature type="binding site" evidence="1">
    <location>
        <position position="149"/>
    </location>
    <ligand>
        <name>Mg(2+)</name>
        <dbReference type="ChEBI" id="CHEBI:18420"/>
    </ligand>
</feature>
<feature type="binding site" evidence="1">
    <location>
        <position position="330"/>
    </location>
    <ligand>
        <name>Mg(2+)</name>
        <dbReference type="ChEBI" id="CHEBI:18420"/>
    </ligand>
</feature>
<dbReference type="EC" id="3.1.3.12"/>
<dbReference type="EMBL" id="AM408590">
    <property type="protein sequence ID" value="CAL73433.1"/>
    <property type="molecule type" value="Genomic_DNA"/>
</dbReference>
<dbReference type="RefSeq" id="WP_003417892.1">
    <property type="nucleotide sequence ID" value="NC_008769.1"/>
</dbReference>
<dbReference type="SMR" id="A1KP65"/>
<dbReference type="KEGG" id="mbb:BCG_3444"/>
<dbReference type="HOGENOM" id="CLU_037265_4_1_11"/>
<dbReference type="UniPathway" id="UPA00299"/>
<dbReference type="Proteomes" id="UP000001472">
    <property type="component" value="Chromosome"/>
</dbReference>
<dbReference type="GO" id="GO:0046872">
    <property type="term" value="F:metal ion binding"/>
    <property type="evidence" value="ECO:0007669"/>
    <property type="project" value="UniProtKB-KW"/>
</dbReference>
<dbReference type="GO" id="GO:0004805">
    <property type="term" value="F:trehalose-phosphatase activity"/>
    <property type="evidence" value="ECO:0007669"/>
    <property type="project" value="UniProtKB-EC"/>
</dbReference>
<dbReference type="GO" id="GO:0005992">
    <property type="term" value="P:trehalose biosynthetic process"/>
    <property type="evidence" value="ECO:0007669"/>
    <property type="project" value="UniProtKB-UniPathway"/>
</dbReference>
<dbReference type="CDD" id="cd01627">
    <property type="entry name" value="HAD_TPP"/>
    <property type="match status" value="1"/>
</dbReference>
<dbReference type="FunFam" id="3.30.70.1020:FF:000007">
    <property type="entry name" value="Trehalose 6-phosphate phosphatase"/>
    <property type="match status" value="1"/>
</dbReference>
<dbReference type="Gene3D" id="3.40.50.1000">
    <property type="entry name" value="HAD superfamily/HAD-like"/>
    <property type="match status" value="2"/>
</dbReference>
<dbReference type="Gene3D" id="3.30.70.1020">
    <property type="entry name" value="Trehalose-6-phosphate phosphatase related protein, domain 2"/>
    <property type="match status" value="1"/>
</dbReference>
<dbReference type="InterPro" id="IPR036412">
    <property type="entry name" value="HAD-like_sf"/>
</dbReference>
<dbReference type="InterPro" id="IPR006379">
    <property type="entry name" value="HAD-SF_hydro_IIB"/>
</dbReference>
<dbReference type="InterPro" id="IPR023214">
    <property type="entry name" value="HAD_sf"/>
</dbReference>
<dbReference type="InterPro" id="IPR044651">
    <property type="entry name" value="OTSB-like"/>
</dbReference>
<dbReference type="InterPro" id="IPR003337">
    <property type="entry name" value="Trehalose_PPase"/>
</dbReference>
<dbReference type="NCBIfam" id="TIGR01484">
    <property type="entry name" value="HAD-SF-IIB"/>
    <property type="match status" value="1"/>
</dbReference>
<dbReference type="NCBIfam" id="TIGR00685">
    <property type="entry name" value="T6PP"/>
    <property type="match status" value="1"/>
</dbReference>
<dbReference type="PANTHER" id="PTHR43768">
    <property type="entry name" value="TREHALOSE 6-PHOSPHATE PHOSPHATASE"/>
    <property type="match status" value="1"/>
</dbReference>
<dbReference type="PANTHER" id="PTHR43768:SF3">
    <property type="entry name" value="TREHALOSE 6-PHOSPHATE PHOSPHATASE"/>
    <property type="match status" value="1"/>
</dbReference>
<dbReference type="Pfam" id="PF02358">
    <property type="entry name" value="Trehalose_PPase"/>
    <property type="match status" value="1"/>
</dbReference>
<dbReference type="SUPFAM" id="SSF56784">
    <property type="entry name" value="HAD-like"/>
    <property type="match status" value="2"/>
</dbReference>
<gene>
    <name type="primary">otsB</name>
    <name type="ordered locus">BCG_3444</name>
</gene>
<protein>
    <recommendedName>
        <fullName>Trehalose-phosphate phosphatase</fullName>
        <shortName>TPP</shortName>
        <ecNumber>3.1.3.12</ecNumber>
    </recommendedName>
    <alternativeName>
        <fullName>Trehalose-6-phosphate phosphatase</fullName>
    </alternativeName>
</protein>
<comment type="function">
    <text evidence="1">Removes the phosphate from trehalose 6-phosphate to produce free trehalose.</text>
</comment>
<comment type="catalytic activity">
    <reaction>
        <text>alpha,alpha-trehalose 6-phosphate + H2O = alpha,alpha-trehalose + phosphate</text>
        <dbReference type="Rhea" id="RHEA:23420"/>
        <dbReference type="ChEBI" id="CHEBI:15377"/>
        <dbReference type="ChEBI" id="CHEBI:16551"/>
        <dbReference type="ChEBI" id="CHEBI:43474"/>
        <dbReference type="ChEBI" id="CHEBI:58429"/>
        <dbReference type="EC" id="3.1.3.12"/>
    </reaction>
</comment>
<comment type="cofactor">
    <cofactor evidence="1">
        <name>Mg(2+)</name>
        <dbReference type="ChEBI" id="CHEBI:18420"/>
    </cofactor>
</comment>
<comment type="pathway">
    <text>Glycan biosynthesis; trehalose biosynthesis.</text>
</comment>
<comment type="similarity">
    <text evidence="2">Belongs to the trehalose phosphatase family.</text>
</comment>
<keyword id="KW-0378">Hydrolase</keyword>
<keyword id="KW-0460">Magnesium</keyword>
<keyword id="KW-0479">Metal-binding</keyword>
<reference key="1">
    <citation type="journal article" date="2007" name="Proc. Natl. Acad. Sci. U.S.A.">
        <title>Genome plasticity of BCG and impact on vaccine efficacy.</title>
        <authorList>
            <person name="Brosch R."/>
            <person name="Gordon S.V."/>
            <person name="Garnier T."/>
            <person name="Eiglmeier K."/>
            <person name="Frigui W."/>
            <person name="Valenti P."/>
            <person name="Dos Santos S."/>
            <person name="Duthoy S."/>
            <person name="Lacroix C."/>
            <person name="Garcia-Pelayo C."/>
            <person name="Inwald J.K."/>
            <person name="Golby P."/>
            <person name="Garcia J.N."/>
            <person name="Hewinson R.G."/>
            <person name="Behr M.A."/>
            <person name="Quail M.A."/>
            <person name="Churcher C."/>
            <person name="Barrell B.G."/>
            <person name="Parkhill J."/>
            <person name="Cole S.T."/>
        </authorList>
    </citation>
    <scope>NUCLEOTIDE SEQUENCE [LARGE SCALE GENOMIC DNA]</scope>
    <source>
        <strain>BCG / Pasteur 1173P2</strain>
    </source>
</reference>